<protein>
    <recommendedName>
        <fullName>Alcohol dehydrogenase-related 31 kDa protein</fullName>
    </recommendedName>
</protein>
<accession>Q07587</accession>
<feature type="chain" id="PRO_0000054506" description="Alcohol dehydrogenase-related 31 kDa protein">
    <location>
        <begin position="1"/>
        <end position="269"/>
    </location>
</feature>
<feature type="active site" description="Proton acceptor" evidence="2">
    <location>
        <position position="152"/>
    </location>
</feature>
<feature type="binding site" evidence="1">
    <location>
        <begin position="11"/>
        <end position="34"/>
    </location>
    <ligand>
        <name>NAD(+)</name>
        <dbReference type="ChEBI" id="CHEBI:57540"/>
    </ligand>
</feature>
<feature type="binding site" evidence="1">
    <location>
        <position position="139"/>
    </location>
    <ligand>
        <name>substrate</name>
    </ligand>
</feature>
<feature type="sequence conflict" description="In Ref. 2; CAA45249." evidence="3" ref="2">
    <original>DKEDD</original>
    <variation>TKRMIRQIRSFQKTIYI</variation>
    <location>
        <begin position="265"/>
        <end position="269"/>
    </location>
</feature>
<gene>
    <name type="primary">Adhr</name>
    <name type="synonym">Adh-dup</name>
</gene>
<evidence type="ECO:0000250" key="1"/>
<evidence type="ECO:0000255" key="2">
    <source>
        <dbReference type="PROSITE-ProRule" id="PRU10001"/>
    </source>
</evidence>
<evidence type="ECO:0000305" key="3"/>
<proteinExistence type="inferred from homology"/>
<organism>
    <name type="scientific">Drosophila lebanonensis</name>
    <name type="common">Fruit fly</name>
    <name type="synonym">Scaptodrosophila lebanonensis</name>
    <dbReference type="NCBI Taxonomy" id="7225"/>
    <lineage>
        <taxon>Eukaryota</taxon>
        <taxon>Metazoa</taxon>
        <taxon>Ecdysozoa</taxon>
        <taxon>Arthropoda</taxon>
        <taxon>Hexapoda</taxon>
        <taxon>Insecta</taxon>
        <taxon>Pterygota</taxon>
        <taxon>Neoptera</taxon>
        <taxon>Endopterygota</taxon>
        <taxon>Diptera</taxon>
        <taxon>Brachycera</taxon>
        <taxon>Muscomorpha</taxon>
        <taxon>Ephydroidea</taxon>
        <taxon>Drosophilidae</taxon>
        <taxon>Scaptodrosophila</taxon>
    </lineage>
</organism>
<reference key="1">
    <citation type="journal article" date="1993" name="Gene">
        <title>Adh and Adh-dup sequences of Drosophila lebanonensis and D. immigrans: interspecies comparisons.</title>
        <authorList>
            <person name="Albalat R."/>
            <person name="Gonzalez-Duarte R."/>
        </authorList>
    </citation>
    <scope>NUCLEOTIDE SEQUENCE [GENOMIC DNA]</scope>
</reference>
<reference key="2">
    <citation type="journal article" date="1994" name="J. Mol. Evol.">
        <title>Nucleotide sequence of the genomic region encompassing Adh and Adh-dup genes of D. lebanonensis (Scaptodrosophila): gene expression and evolutionary relationships.</title>
        <authorList>
            <person name="Juan E."/>
            <person name="Papaceit M."/>
            <person name="Quintana A."/>
        </authorList>
    </citation>
    <scope>NUCLEOTIDE SEQUENCE [GENOMIC DNA]</scope>
</reference>
<comment type="similarity">
    <text evidence="3">Belongs to the short-chain dehydrogenases/reductases (SDR) family.</text>
</comment>
<keyword id="KW-0560">Oxidoreductase</keyword>
<keyword id="KW-1185">Reference proteome</keyword>
<dbReference type="EMBL" id="M97637">
    <property type="protein sequence ID" value="AAA28356.1"/>
    <property type="molecule type" value="Genomic_DNA"/>
</dbReference>
<dbReference type="EMBL" id="X63716">
    <property type="protein sequence ID" value="CAA45249.1"/>
    <property type="molecule type" value="Genomic_DNA"/>
</dbReference>
<dbReference type="PIR" id="JN0565">
    <property type="entry name" value="JN0565"/>
</dbReference>
<dbReference type="SMR" id="Q07587"/>
<dbReference type="OrthoDB" id="417891at2759"/>
<dbReference type="Proteomes" id="UP000504634">
    <property type="component" value="Unplaced"/>
</dbReference>
<dbReference type="GO" id="GO:0005737">
    <property type="term" value="C:cytoplasm"/>
    <property type="evidence" value="ECO:0007669"/>
    <property type="project" value="TreeGrafter"/>
</dbReference>
<dbReference type="GO" id="GO:0016491">
    <property type="term" value="F:oxidoreductase activity"/>
    <property type="evidence" value="ECO:0007669"/>
    <property type="project" value="UniProtKB-KW"/>
</dbReference>
<dbReference type="CDD" id="cd05323">
    <property type="entry name" value="ADH_SDR_c_like"/>
    <property type="match status" value="1"/>
</dbReference>
<dbReference type="Gene3D" id="3.40.50.720">
    <property type="entry name" value="NAD(P)-binding Rossmann-like Domain"/>
    <property type="match status" value="1"/>
</dbReference>
<dbReference type="InterPro" id="IPR002427">
    <property type="entry name" value="ADH-rel"/>
</dbReference>
<dbReference type="InterPro" id="IPR036291">
    <property type="entry name" value="NAD(P)-bd_dom_sf"/>
</dbReference>
<dbReference type="InterPro" id="IPR020904">
    <property type="entry name" value="Sc_DH/Rdtase_CS"/>
</dbReference>
<dbReference type="InterPro" id="IPR002347">
    <property type="entry name" value="SDR_fam"/>
</dbReference>
<dbReference type="PANTHER" id="PTHR44229">
    <property type="entry name" value="15-HYDROXYPROSTAGLANDIN DEHYDROGENASE [NAD(+)]"/>
    <property type="match status" value="1"/>
</dbReference>
<dbReference type="PANTHER" id="PTHR44229:SF8">
    <property type="entry name" value="ALCOHOL DEHYDROGENASE-RELATED"/>
    <property type="match status" value="1"/>
</dbReference>
<dbReference type="Pfam" id="PF00106">
    <property type="entry name" value="adh_short"/>
    <property type="match status" value="1"/>
</dbReference>
<dbReference type="PRINTS" id="PR01170">
    <property type="entry name" value="ADHRELATED"/>
</dbReference>
<dbReference type="PRINTS" id="PR01167">
    <property type="entry name" value="INSADHFAMILY"/>
</dbReference>
<dbReference type="PRINTS" id="PR00080">
    <property type="entry name" value="SDRFAMILY"/>
</dbReference>
<dbReference type="SUPFAM" id="SSF51735">
    <property type="entry name" value="NAD(P)-binding Rossmann-fold domains"/>
    <property type="match status" value="1"/>
</dbReference>
<dbReference type="PROSITE" id="PS00061">
    <property type="entry name" value="ADH_SHORT"/>
    <property type="match status" value="1"/>
</dbReference>
<sequence length="269" mass="29658">MFDLTGKNVCYVADCGGIALETCKVLMTKNIAKLAILHSVENPQAIAQLQSLKPSTQIFFWTYDVTMARADMQKYFDEVMVQMDYIDVLIYGATLCDETDIDGTINTNLTGMMNTCATVLPHMDKKKDGSGGLILNVTSVIGLDPSPVFCAYSASKFGVIGFTRSLADPLYYTQNGVAVMAVCCGPTKVFVDRELTAFLPYGQSFADRLRTAPCQSTAVCGQNIVRAIERGENGQIWIADKGGLELVKLQSYWHMADVFLHYMQDKEDD</sequence>
<name>ADHR_DROLE</name>